<gene>
    <name evidence="1" type="primary">rplC</name>
    <name type="ordered locus">FTT_0325</name>
</gene>
<evidence type="ECO:0000255" key="1">
    <source>
        <dbReference type="HAMAP-Rule" id="MF_01325"/>
    </source>
</evidence>
<evidence type="ECO:0000305" key="2"/>
<name>RL3_FRATT</name>
<feature type="chain" id="PRO_0000241346" description="Large ribosomal subunit protein uL3">
    <location>
        <begin position="1"/>
        <end position="211"/>
    </location>
</feature>
<feature type="modified residue" description="N5-methylglutamine" evidence="1">
    <location>
        <position position="151"/>
    </location>
</feature>
<keyword id="KW-0488">Methylation</keyword>
<keyword id="KW-1185">Reference proteome</keyword>
<keyword id="KW-0687">Ribonucleoprotein</keyword>
<keyword id="KW-0689">Ribosomal protein</keyword>
<keyword id="KW-0694">RNA-binding</keyword>
<keyword id="KW-0699">rRNA-binding</keyword>
<proteinExistence type="inferred from homology"/>
<sequence length="211" mass="22494">MSLGLVGRKCGMTRIFTEDGVSIPVTVVQVEPNKVTQVKTVEKDGYNAIQVTTGFKKRSNVNKPMAGHYAKASVEPGRGLWEFTVDAAAEYQVGSSFDATMFEAGQKVDVRGVSKGKGFQGGVKRHNFATQDATHGNSLSHRVHGSTGQNQTPGRVFKNKKMAGHLGNENVTIQSLEVVRVDAENGLLLLKGGIPGSVGGDIIVTPAVKSW</sequence>
<accession>Q5NHW8</accession>
<comment type="function">
    <text evidence="1">One of the primary rRNA binding proteins, it binds directly near the 3'-end of the 23S rRNA, where it nucleates assembly of the 50S subunit.</text>
</comment>
<comment type="subunit">
    <text evidence="1">Part of the 50S ribosomal subunit. Forms a cluster with proteins L14 and L19.</text>
</comment>
<comment type="PTM">
    <text evidence="1">Methylated by PrmB.</text>
</comment>
<comment type="similarity">
    <text evidence="1">Belongs to the universal ribosomal protein uL3 family.</text>
</comment>
<reference key="1">
    <citation type="journal article" date="2005" name="Nat. Genet.">
        <title>The complete genome sequence of Francisella tularensis, the causative agent of tularemia.</title>
        <authorList>
            <person name="Larsson P."/>
            <person name="Oyston P.C.F."/>
            <person name="Chain P."/>
            <person name="Chu M.C."/>
            <person name="Duffield M."/>
            <person name="Fuxelius H.-H."/>
            <person name="Garcia E."/>
            <person name="Haelltorp G."/>
            <person name="Johansson D."/>
            <person name="Isherwood K.E."/>
            <person name="Karp P.D."/>
            <person name="Larsson E."/>
            <person name="Liu Y."/>
            <person name="Michell S."/>
            <person name="Prior J."/>
            <person name="Prior R."/>
            <person name="Malfatti S."/>
            <person name="Sjoestedt A."/>
            <person name="Svensson K."/>
            <person name="Thompson N."/>
            <person name="Vergez L."/>
            <person name="Wagg J.K."/>
            <person name="Wren B.W."/>
            <person name="Lindler L.E."/>
            <person name="Andersson S.G.E."/>
            <person name="Forsman M."/>
            <person name="Titball R.W."/>
        </authorList>
    </citation>
    <scope>NUCLEOTIDE SEQUENCE [LARGE SCALE GENOMIC DNA]</scope>
    <source>
        <strain>SCHU S4 / Schu 4</strain>
    </source>
</reference>
<organism>
    <name type="scientific">Francisella tularensis subsp. tularensis (strain SCHU S4 / Schu 4)</name>
    <dbReference type="NCBI Taxonomy" id="177416"/>
    <lineage>
        <taxon>Bacteria</taxon>
        <taxon>Pseudomonadati</taxon>
        <taxon>Pseudomonadota</taxon>
        <taxon>Gammaproteobacteria</taxon>
        <taxon>Thiotrichales</taxon>
        <taxon>Francisellaceae</taxon>
        <taxon>Francisella</taxon>
    </lineage>
</organism>
<dbReference type="EMBL" id="AJ749949">
    <property type="protein sequence ID" value="CAG44958.1"/>
    <property type="molecule type" value="Genomic_DNA"/>
</dbReference>
<dbReference type="RefSeq" id="WP_003021602.1">
    <property type="nucleotide sequence ID" value="NC_006570.2"/>
</dbReference>
<dbReference type="RefSeq" id="YP_169374.1">
    <property type="nucleotide sequence ID" value="NC_006570.2"/>
</dbReference>
<dbReference type="SMR" id="Q5NHW8"/>
<dbReference type="STRING" id="177416.FTT_0325"/>
<dbReference type="DNASU" id="3192021"/>
<dbReference type="EnsemblBacteria" id="CAG44958">
    <property type="protein sequence ID" value="CAG44958"/>
    <property type="gene ID" value="FTT_0325"/>
</dbReference>
<dbReference type="KEGG" id="ftu:FTT_0325"/>
<dbReference type="eggNOG" id="COG0087">
    <property type="taxonomic scope" value="Bacteria"/>
</dbReference>
<dbReference type="OrthoDB" id="9806135at2"/>
<dbReference type="Proteomes" id="UP000001174">
    <property type="component" value="Chromosome"/>
</dbReference>
<dbReference type="GO" id="GO:0022625">
    <property type="term" value="C:cytosolic large ribosomal subunit"/>
    <property type="evidence" value="ECO:0007669"/>
    <property type="project" value="TreeGrafter"/>
</dbReference>
<dbReference type="GO" id="GO:0019843">
    <property type="term" value="F:rRNA binding"/>
    <property type="evidence" value="ECO:0007669"/>
    <property type="project" value="UniProtKB-UniRule"/>
</dbReference>
<dbReference type="GO" id="GO:0003735">
    <property type="term" value="F:structural constituent of ribosome"/>
    <property type="evidence" value="ECO:0007669"/>
    <property type="project" value="InterPro"/>
</dbReference>
<dbReference type="GO" id="GO:0006412">
    <property type="term" value="P:translation"/>
    <property type="evidence" value="ECO:0007669"/>
    <property type="project" value="UniProtKB-UniRule"/>
</dbReference>
<dbReference type="FunFam" id="2.40.30.10:FF:000004">
    <property type="entry name" value="50S ribosomal protein L3"/>
    <property type="match status" value="1"/>
</dbReference>
<dbReference type="FunFam" id="3.30.160.810:FF:000001">
    <property type="entry name" value="50S ribosomal protein L3"/>
    <property type="match status" value="1"/>
</dbReference>
<dbReference type="Gene3D" id="3.30.160.810">
    <property type="match status" value="1"/>
</dbReference>
<dbReference type="Gene3D" id="2.40.30.10">
    <property type="entry name" value="Translation factors"/>
    <property type="match status" value="1"/>
</dbReference>
<dbReference type="HAMAP" id="MF_01325_B">
    <property type="entry name" value="Ribosomal_uL3_B"/>
    <property type="match status" value="1"/>
</dbReference>
<dbReference type="InterPro" id="IPR000597">
    <property type="entry name" value="Ribosomal_uL3"/>
</dbReference>
<dbReference type="InterPro" id="IPR019927">
    <property type="entry name" value="Ribosomal_uL3_bac/org-type"/>
</dbReference>
<dbReference type="InterPro" id="IPR019926">
    <property type="entry name" value="Ribosomal_uL3_CS"/>
</dbReference>
<dbReference type="InterPro" id="IPR009000">
    <property type="entry name" value="Transl_B-barrel_sf"/>
</dbReference>
<dbReference type="NCBIfam" id="TIGR03625">
    <property type="entry name" value="L3_bact"/>
    <property type="match status" value="1"/>
</dbReference>
<dbReference type="PANTHER" id="PTHR11229">
    <property type="entry name" value="50S RIBOSOMAL PROTEIN L3"/>
    <property type="match status" value="1"/>
</dbReference>
<dbReference type="PANTHER" id="PTHR11229:SF16">
    <property type="entry name" value="LARGE RIBOSOMAL SUBUNIT PROTEIN UL3C"/>
    <property type="match status" value="1"/>
</dbReference>
<dbReference type="Pfam" id="PF00297">
    <property type="entry name" value="Ribosomal_L3"/>
    <property type="match status" value="1"/>
</dbReference>
<dbReference type="SUPFAM" id="SSF50447">
    <property type="entry name" value="Translation proteins"/>
    <property type="match status" value="1"/>
</dbReference>
<dbReference type="PROSITE" id="PS00474">
    <property type="entry name" value="RIBOSOMAL_L3"/>
    <property type="match status" value="1"/>
</dbReference>
<protein>
    <recommendedName>
        <fullName evidence="1">Large ribosomal subunit protein uL3</fullName>
    </recommendedName>
    <alternativeName>
        <fullName evidence="2">50S ribosomal protein L3</fullName>
    </alternativeName>
</protein>